<protein>
    <recommendedName>
        <fullName evidence="2">6,7-dimethyl-8-ribityllumazine synthase 1</fullName>
        <shortName evidence="2">DMRL synthase 1</shortName>
        <shortName evidence="2">LS 1</shortName>
        <shortName evidence="2">Lumazine synthase 1</shortName>
        <ecNumber evidence="2">2.5.1.78</ecNumber>
    </recommendedName>
    <alternativeName>
        <fullName evidence="1">Type I lumazine synthase</fullName>
    </alternativeName>
</protein>
<sequence length="157" mass="16791">MEFLMSKHEADAPHLLIVEARFYDDLADALLDGAKAALDEAGATYDVVTVPGALEIPATISFALDGADNGGTEYDGFVALGTVIRGETYHFDIVSNESCRALTDLSVEESIAIGNGILTVENEEQAWVHARREDKDKGGFAARAALTMIGLRKKFGA</sequence>
<proteinExistence type="inferred from homology"/>
<name>RISB1_BRUAB</name>
<reference key="1">
    <citation type="journal article" date="2005" name="J. Bacteriol.">
        <title>Completion of the genome sequence of Brucella abortus and comparison to the highly similar genomes of Brucella melitensis and Brucella suis.</title>
        <authorList>
            <person name="Halling S.M."/>
            <person name="Peterson-Burch B.D."/>
            <person name="Bricker B.J."/>
            <person name="Zuerner R.L."/>
            <person name="Qing Z."/>
            <person name="Li L.-L."/>
            <person name="Kapur V."/>
            <person name="Alt D.P."/>
            <person name="Olsen S.C."/>
        </authorList>
    </citation>
    <scope>NUCLEOTIDE SEQUENCE [LARGE SCALE GENOMIC DNA]</scope>
    <source>
        <strain>9-941</strain>
    </source>
</reference>
<evidence type="ECO:0000250" key="1">
    <source>
        <dbReference type="UniProtKB" id="Q2YNC6"/>
    </source>
</evidence>
<evidence type="ECO:0000255" key="2">
    <source>
        <dbReference type="HAMAP-Rule" id="MF_00178"/>
    </source>
</evidence>
<accession>Q57DY1</accession>
<dbReference type="EC" id="2.5.1.78" evidence="2"/>
<dbReference type="EMBL" id="AE017223">
    <property type="protein sequence ID" value="AAX74153.1"/>
    <property type="molecule type" value="Genomic_DNA"/>
</dbReference>
<dbReference type="SMR" id="Q57DY1"/>
<dbReference type="EnsemblBacteria" id="AAX74153">
    <property type="protein sequence ID" value="AAX74153"/>
    <property type="gene ID" value="BruAb1_0785"/>
</dbReference>
<dbReference type="KEGG" id="bmb:BruAb1_0785"/>
<dbReference type="HOGENOM" id="CLU_089358_1_2_5"/>
<dbReference type="BRENDA" id="2.5.1.78">
    <property type="organism ID" value="994"/>
</dbReference>
<dbReference type="UniPathway" id="UPA00275">
    <property type="reaction ID" value="UER00404"/>
</dbReference>
<dbReference type="EvolutionaryTrace" id="Q57DY1"/>
<dbReference type="Proteomes" id="UP000000540">
    <property type="component" value="Chromosome I"/>
</dbReference>
<dbReference type="GO" id="GO:0005829">
    <property type="term" value="C:cytosol"/>
    <property type="evidence" value="ECO:0007669"/>
    <property type="project" value="TreeGrafter"/>
</dbReference>
<dbReference type="GO" id="GO:0009349">
    <property type="term" value="C:riboflavin synthase complex"/>
    <property type="evidence" value="ECO:0007669"/>
    <property type="project" value="InterPro"/>
</dbReference>
<dbReference type="GO" id="GO:0000906">
    <property type="term" value="F:6,7-dimethyl-8-ribityllumazine synthase activity"/>
    <property type="evidence" value="ECO:0007669"/>
    <property type="project" value="UniProtKB-UniRule"/>
</dbReference>
<dbReference type="GO" id="GO:0009231">
    <property type="term" value="P:riboflavin biosynthetic process"/>
    <property type="evidence" value="ECO:0007669"/>
    <property type="project" value="UniProtKB-UniRule"/>
</dbReference>
<dbReference type="CDD" id="cd09209">
    <property type="entry name" value="Lumazine_synthase-I"/>
    <property type="match status" value="1"/>
</dbReference>
<dbReference type="Gene3D" id="3.40.50.960">
    <property type="entry name" value="Lumazine/riboflavin synthase"/>
    <property type="match status" value="1"/>
</dbReference>
<dbReference type="HAMAP" id="MF_00178">
    <property type="entry name" value="Lumazine_synth"/>
    <property type="match status" value="1"/>
</dbReference>
<dbReference type="InterPro" id="IPR034964">
    <property type="entry name" value="LS"/>
</dbReference>
<dbReference type="InterPro" id="IPR002180">
    <property type="entry name" value="LS/RS"/>
</dbReference>
<dbReference type="InterPro" id="IPR036467">
    <property type="entry name" value="LS/RS_sf"/>
</dbReference>
<dbReference type="NCBIfam" id="TIGR00114">
    <property type="entry name" value="lumazine-synth"/>
    <property type="match status" value="1"/>
</dbReference>
<dbReference type="NCBIfam" id="NF000814">
    <property type="entry name" value="PRK00061.2-2"/>
    <property type="match status" value="1"/>
</dbReference>
<dbReference type="PANTHER" id="PTHR21058:SF0">
    <property type="entry name" value="6,7-DIMETHYL-8-RIBITYLLUMAZINE SYNTHASE"/>
    <property type="match status" value="1"/>
</dbReference>
<dbReference type="PANTHER" id="PTHR21058">
    <property type="entry name" value="6,7-DIMETHYL-8-RIBITYLLUMAZINE SYNTHASE DMRL SYNTHASE LUMAZINE SYNTHASE"/>
    <property type="match status" value="1"/>
</dbReference>
<dbReference type="Pfam" id="PF00885">
    <property type="entry name" value="DMRL_synthase"/>
    <property type="match status" value="1"/>
</dbReference>
<dbReference type="SUPFAM" id="SSF52121">
    <property type="entry name" value="Lumazine synthase"/>
    <property type="match status" value="1"/>
</dbReference>
<organism>
    <name type="scientific">Brucella abortus biovar 1 (strain 9-941)</name>
    <dbReference type="NCBI Taxonomy" id="262698"/>
    <lineage>
        <taxon>Bacteria</taxon>
        <taxon>Pseudomonadati</taxon>
        <taxon>Pseudomonadota</taxon>
        <taxon>Alphaproteobacteria</taxon>
        <taxon>Hyphomicrobiales</taxon>
        <taxon>Brucellaceae</taxon>
        <taxon>Brucella/Ochrobactrum group</taxon>
        <taxon>Brucella</taxon>
    </lineage>
</organism>
<comment type="function">
    <text evidence="2">Catalyzes the formation of 6,7-dimethyl-8-ribityllumazine by condensation of 5-amino-6-(D-ribitylamino)uracil with 3,4-dihydroxy-2-butanone 4-phosphate. This is the penultimate step in the biosynthesis of riboflavin.</text>
</comment>
<comment type="catalytic activity">
    <reaction evidence="2">
        <text>(2S)-2-hydroxy-3-oxobutyl phosphate + 5-amino-6-(D-ribitylamino)uracil = 6,7-dimethyl-8-(1-D-ribityl)lumazine + phosphate + 2 H2O + H(+)</text>
        <dbReference type="Rhea" id="RHEA:26152"/>
        <dbReference type="ChEBI" id="CHEBI:15377"/>
        <dbReference type="ChEBI" id="CHEBI:15378"/>
        <dbReference type="ChEBI" id="CHEBI:15934"/>
        <dbReference type="ChEBI" id="CHEBI:43474"/>
        <dbReference type="ChEBI" id="CHEBI:58201"/>
        <dbReference type="ChEBI" id="CHEBI:58830"/>
        <dbReference type="EC" id="2.5.1.78"/>
    </reaction>
</comment>
<comment type="pathway">
    <text evidence="2">Cofactor biosynthesis; riboflavin biosynthesis; riboflavin from 2-hydroxy-3-oxobutyl phosphate and 5-amino-6-(D-ribitylamino)uracil: step 1/2.</text>
</comment>
<comment type="subunit">
    <text evidence="1">Homopentamer.</text>
</comment>
<comment type="induction">
    <text evidence="1">The two ribH genes may be differentially expressed during the Brucella infection cycle. Brucella would use RibH1 for flavin biosynthesis during the extracellular phase and RibH2 during intracellular growth.</text>
</comment>
<comment type="similarity">
    <text evidence="2">Belongs to the DMRL synthase family.</text>
</comment>
<keyword id="KW-0686">Riboflavin biosynthesis</keyword>
<keyword id="KW-0808">Transferase</keyword>
<gene>
    <name evidence="2" type="primary">ribH1</name>
    <name type="synonym">ribH</name>
    <name type="synonym">ribH-1</name>
    <name type="ordered locus">BruAb1_0785</name>
</gene>
<feature type="chain" id="PRO_0000134724" description="6,7-dimethyl-8-ribityllumazine synthase 1">
    <location>
        <begin position="1"/>
        <end position="157"/>
    </location>
</feature>
<feature type="active site" description="Proton donor" evidence="2">
    <location>
        <position position="90"/>
    </location>
</feature>
<feature type="binding site" evidence="2">
    <location>
        <position position="22"/>
    </location>
    <ligand>
        <name>5-amino-6-(D-ribitylamino)uracil</name>
        <dbReference type="ChEBI" id="CHEBI:15934"/>
    </ligand>
</feature>
<feature type="binding site" evidence="2">
    <location>
        <begin position="53"/>
        <end position="55"/>
    </location>
    <ligand>
        <name>5-amino-6-(D-ribitylamino)uracil</name>
        <dbReference type="ChEBI" id="CHEBI:15934"/>
    </ligand>
</feature>
<feature type="binding site" evidence="2">
    <location>
        <begin position="82"/>
        <end position="84"/>
    </location>
    <ligand>
        <name>5-amino-6-(D-ribitylamino)uracil</name>
        <dbReference type="ChEBI" id="CHEBI:15934"/>
    </ligand>
</feature>
<feature type="binding site" evidence="2">
    <location>
        <begin position="87"/>
        <end position="88"/>
    </location>
    <ligand>
        <name>(2S)-2-hydroxy-3-oxobutyl phosphate</name>
        <dbReference type="ChEBI" id="CHEBI:58830"/>
    </ligand>
</feature>
<feature type="binding site" evidence="2">
    <location>
        <position position="115"/>
    </location>
    <ligand>
        <name>5-amino-6-(D-ribitylamino)uracil</name>
        <dbReference type="ChEBI" id="CHEBI:15934"/>
    </ligand>
</feature>
<feature type="binding site" evidence="2">
    <location>
        <position position="129"/>
    </location>
    <ligand>
        <name>(2S)-2-hydroxy-3-oxobutyl phosphate</name>
        <dbReference type="ChEBI" id="CHEBI:58830"/>
    </ligand>
</feature>
<feature type="binding site" evidence="2">
    <location>
        <position position="137"/>
    </location>
    <ligand>
        <name>5-amino-6-(D-ribitylamino)uracil</name>
        <dbReference type="ChEBI" id="CHEBI:15934"/>
    </ligand>
</feature>